<proteinExistence type="inferred from homology"/>
<sequence length="123" mass="13871">MPTVNQLIRKPRTAPVKRNKVPALQANPQKRGVCTRVYTTTPKKPNSALRKVAKVRLTNGFEVIGYIPGEGHNLQEHSVVMIRGGRVKDLPGVRYHIIRGVLDTQGVKNRKQRRSKYGAKRPK</sequence>
<evidence type="ECO:0000250" key="1"/>
<evidence type="ECO:0000269" key="2">
    <source>
    </source>
</evidence>
<evidence type="ECO:0000305" key="3"/>
<name>RS12_BRUME</name>
<accession>Q8GH23</accession>
<accession>Q8YHP5</accession>
<gene>
    <name type="primary">rpsL</name>
    <name type="ordered locus">BMEI0752</name>
</gene>
<dbReference type="EMBL" id="AF448459">
    <property type="protein sequence ID" value="AAN77280.1"/>
    <property type="molecule type" value="Genomic_DNA"/>
</dbReference>
<dbReference type="EMBL" id="AE008917">
    <property type="protein sequence ID" value="AAL51933.1"/>
    <property type="status" value="ALT_INIT"/>
    <property type="molecule type" value="Genomic_DNA"/>
</dbReference>
<dbReference type="PIR" id="AB3346">
    <property type="entry name" value="AB3346"/>
</dbReference>
<dbReference type="RefSeq" id="WP_002964366.1">
    <property type="nucleotide sequence ID" value="NZ_GG703780.1"/>
</dbReference>
<dbReference type="SMR" id="Q8GH23"/>
<dbReference type="GeneID" id="93016435"/>
<dbReference type="KEGG" id="bme:BMEI0752"/>
<dbReference type="KEGG" id="bmel:DK63_670"/>
<dbReference type="PATRIC" id="fig|224914.52.peg.701"/>
<dbReference type="eggNOG" id="COG0048">
    <property type="taxonomic scope" value="Bacteria"/>
</dbReference>
<dbReference type="Proteomes" id="UP000000419">
    <property type="component" value="Chromosome I"/>
</dbReference>
<dbReference type="GO" id="GO:0015935">
    <property type="term" value="C:small ribosomal subunit"/>
    <property type="evidence" value="ECO:0007669"/>
    <property type="project" value="InterPro"/>
</dbReference>
<dbReference type="GO" id="GO:0019843">
    <property type="term" value="F:rRNA binding"/>
    <property type="evidence" value="ECO:0007669"/>
    <property type="project" value="UniProtKB-UniRule"/>
</dbReference>
<dbReference type="GO" id="GO:0003735">
    <property type="term" value="F:structural constituent of ribosome"/>
    <property type="evidence" value="ECO:0007669"/>
    <property type="project" value="InterPro"/>
</dbReference>
<dbReference type="GO" id="GO:0000049">
    <property type="term" value="F:tRNA binding"/>
    <property type="evidence" value="ECO:0007669"/>
    <property type="project" value="UniProtKB-UniRule"/>
</dbReference>
<dbReference type="GO" id="GO:0006412">
    <property type="term" value="P:translation"/>
    <property type="evidence" value="ECO:0007669"/>
    <property type="project" value="UniProtKB-UniRule"/>
</dbReference>
<dbReference type="CDD" id="cd03368">
    <property type="entry name" value="Ribosomal_S12"/>
    <property type="match status" value="1"/>
</dbReference>
<dbReference type="FunFam" id="2.40.50.140:FF:000001">
    <property type="entry name" value="30S ribosomal protein S12"/>
    <property type="match status" value="1"/>
</dbReference>
<dbReference type="Gene3D" id="2.40.50.140">
    <property type="entry name" value="Nucleic acid-binding proteins"/>
    <property type="match status" value="1"/>
</dbReference>
<dbReference type="HAMAP" id="MF_00403_B">
    <property type="entry name" value="Ribosomal_uS12_B"/>
    <property type="match status" value="1"/>
</dbReference>
<dbReference type="InterPro" id="IPR012340">
    <property type="entry name" value="NA-bd_OB-fold"/>
</dbReference>
<dbReference type="InterPro" id="IPR006032">
    <property type="entry name" value="Ribosomal_uS12"/>
</dbReference>
<dbReference type="InterPro" id="IPR005679">
    <property type="entry name" value="Ribosomal_uS12_bac"/>
</dbReference>
<dbReference type="NCBIfam" id="TIGR00981">
    <property type="entry name" value="rpsL_bact"/>
    <property type="match status" value="1"/>
</dbReference>
<dbReference type="PANTHER" id="PTHR11652">
    <property type="entry name" value="30S RIBOSOMAL PROTEIN S12 FAMILY MEMBER"/>
    <property type="match status" value="1"/>
</dbReference>
<dbReference type="Pfam" id="PF00164">
    <property type="entry name" value="Ribosom_S12_S23"/>
    <property type="match status" value="1"/>
</dbReference>
<dbReference type="PIRSF" id="PIRSF002133">
    <property type="entry name" value="Ribosomal_S12/S23"/>
    <property type="match status" value="1"/>
</dbReference>
<dbReference type="PRINTS" id="PR01034">
    <property type="entry name" value="RIBOSOMALS12"/>
</dbReference>
<dbReference type="SUPFAM" id="SSF50249">
    <property type="entry name" value="Nucleic acid-binding proteins"/>
    <property type="match status" value="1"/>
</dbReference>
<dbReference type="PROSITE" id="PS00055">
    <property type="entry name" value="RIBOSOMAL_S12"/>
    <property type="match status" value="1"/>
</dbReference>
<reference key="1">
    <citation type="journal article" date="2002" name="Vaccine">
        <title>Identification of Brucella melitensis vaccine strain Rev.1 by PCR-RFLP based on a mutation in the rpsL gene.</title>
        <authorList>
            <person name="Cloeckaert A."/>
            <person name="Grayon M."/>
            <person name="Grepinet O."/>
        </authorList>
    </citation>
    <scope>NUCLEOTIDE SEQUENCE [GENOMIC DNA]</scope>
    <scope>VARIANT LEU-91</scope>
    <source>
        <strain>Rev.1</strain>
    </source>
</reference>
<reference key="2">
    <citation type="journal article" date="2002" name="Proc. Natl. Acad. Sci. U.S.A.">
        <title>The genome sequence of the facultative intracellular pathogen Brucella melitensis.</title>
        <authorList>
            <person name="DelVecchio V.G."/>
            <person name="Kapatral V."/>
            <person name="Redkar R.J."/>
            <person name="Patra G."/>
            <person name="Mujer C."/>
            <person name="Los T."/>
            <person name="Ivanova N."/>
            <person name="Anderson I."/>
            <person name="Bhattacharyya A."/>
            <person name="Lykidis A."/>
            <person name="Reznik G."/>
            <person name="Jablonski L."/>
            <person name="Larsen N."/>
            <person name="D'Souza M."/>
            <person name="Bernal A."/>
            <person name="Mazur M."/>
            <person name="Goltsman E."/>
            <person name="Selkov E."/>
            <person name="Elzer P.H."/>
            <person name="Hagius S."/>
            <person name="O'Callaghan D."/>
            <person name="Letesson J.-J."/>
            <person name="Haselkorn R."/>
            <person name="Kyrpides N.C."/>
            <person name="Overbeek R."/>
        </authorList>
    </citation>
    <scope>NUCLEOTIDE SEQUENCE [LARGE SCALE GENOMIC DNA]</scope>
    <source>
        <strain>ATCC 23456 / CCUG 17765 / NCTC 10094 / 16M</strain>
    </source>
</reference>
<comment type="function">
    <text evidence="1">With S4 and S5 plays an important role in translational accuracy.</text>
</comment>
<comment type="function">
    <text evidence="1">Interacts with and stabilizes bases of the 16S rRNA that are involved in tRNA selection in the A site and with the mRNA backbone. Located at the interface of the 30S and 50S subunits, it traverses the body of the 30S subunit contacting proteins on the other side and probably holding the rRNA structure together. The combined cluster of proteins S8, S12 and S17 appears to hold together the shoulder and platform of the 30S subunit (By similarity).</text>
</comment>
<comment type="subunit">
    <text evidence="1">Part of the 30S ribosomal subunit. Contacts proteins S8 and S17. May interact with IF1 in the 30S initiation complex (By similarity).</text>
</comment>
<comment type="similarity">
    <text evidence="3">Belongs to the universal ribosomal protein uS12 family.</text>
</comment>
<comment type="sequence caution" evidence="3">
    <conflict type="erroneous initiation">
        <sequence resource="EMBL-CDS" id="AAL51933"/>
    </conflict>
</comment>
<protein>
    <recommendedName>
        <fullName evidence="3">Small ribosomal subunit protein uS12</fullName>
    </recommendedName>
    <alternativeName>
        <fullName>30S ribosomal protein S12</fullName>
    </alternativeName>
</protein>
<feature type="chain" id="PRO_0000146190" description="Small ribosomal subunit protein uS12">
    <location>
        <begin position="1"/>
        <end position="123"/>
    </location>
</feature>
<feature type="modified residue" description="3-methylthioaspartic acid" evidence="1">
    <location>
        <position position="89"/>
    </location>
</feature>
<feature type="sequence variant" description="In strain: Rev.1; induces streptomycin resistance in this live attenuated vaccine strain." evidence="2">
    <original>P</original>
    <variation>L</variation>
    <location>
        <position position="91"/>
    </location>
</feature>
<keyword id="KW-0488">Methylation</keyword>
<keyword id="KW-0687">Ribonucleoprotein</keyword>
<keyword id="KW-0689">Ribosomal protein</keyword>
<keyword id="KW-0694">RNA-binding</keyword>
<keyword id="KW-0699">rRNA-binding</keyword>
<keyword id="KW-0820">tRNA-binding</keyword>
<organism>
    <name type="scientific">Brucella melitensis biotype 1 (strain ATCC 23456 / CCUG 17765 / NCTC 10094 / 16M)</name>
    <dbReference type="NCBI Taxonomy" id="224914"/>
    <lineage>
        <taxon>Bacteria</taxon>
        <taxon>Pseudomonadati</taxon>
        <taxon>Pseudomonadota</taxon>
        <taxon>Alphaproteobacteria</taxon>
        <taxon>Hyphomicrobiales</taxon>
        <taxon>Brucellaceae</taxon>
        <taxon>Brucella/Ochrobactrum group</taxon>
        <taxon>Brucella</taxon>
    </lineage>
</organism>